<protein>
    <recommendedName>
        <fullName evidence="1">Ribosome-recycling factor</fullName>
        <shortName evidence="1">RRF</shortName>
    </recommendedName>
    <alternativeName>
        <fullName evidence="1">Ribosome-releasing factor</fullName>
    </alternativeName>
</protein>
<accession>Q03WX8</accession>
<sequence>MTFDLTNAKERMKGAQEALQRELANIRTGRANPNILNRVEVEYYGAMTPLNQVASISVPEARILLITPFDKSALEAIVHAINVSDLGLNPASDGNIVRLAIPQMTEERRKELAKEVKAEAEKAKVSVRNVRRDIMDDIKKDKDMPEDDARKAEDQTQKLTDENIKAIDEIAAEKEKELLTI</sequence>
<name>RRF_LEUMM</name>
<dbReference type="EMBL" id="CP000414">
    <property type="protein sequence ID" value="ABJ62294.1"/>
    <property type="molecule type" value="Genomic_DNA"/>
</dbReference>
<dbReference type="RefSeq" id="WP_002814677.1">
    <property type="nucleotide sequence ID" value="NC_008531.1"/>
</dbReference>
<dbReference type="SMR" id="Q03WX8"/>
<dbReference type="EnsemblBacteria" id="ABJ62294">
    <property type="protein sequence ID" value="ABJ62294"/>
    <property type="gene ID" value="LEUM_1196"/>
</dbReference>
<dbReference type="GeneID" id="29576611"/>
<dbReference type="KEGG" id="lme:LEUM_1196"/>
<dbReference type="eggNOG" id="COG0233">
    <property type="taxonomic scope" value="Bacteria"/>
</dbReference>
<dbReference type="HOGENOM" id="CLU_073981_2_0_9"/>
<dbReference type="Proteomes" id="UP000000362">
    <property type="component" value="Chromosome"/>
</dbReference>
<dbReference type="GO" id="GO:0005737">
    <property type="term" value="C:cytoplasm"/>
    <property type="evidence" value="ECO:0007669"/>
    <property type="project" value="UniProtKB-SubCell"/>
</dbReference>
<dbReference type="GO" id="GO:0043023">
    <property type="term" value="F:ribosomal large subunit binding"/>
    <property type="evidence" value="ECO:0007669"/>
    <property type="project" value="TreeGrafter"/>
</dbReference>
<dbReference type="GO" id="GO:0006415">
    <property type="term" value="P:translational termination"/>
    <property type="evidence" value="ECO:0007669"/>
    <property type="project" value="UniProtKB-UniRule"/>
</dbReference>
<dbReference type="CDD" id="cd00520">
    <property type="entry name" value="RRF"/>
    <property type="match status" value="1"/>
</dbReference>
<dbReference type="FunFam" id="1.10.132.20:FF:000001">
    <property type="entry name" value="Ribosome-recycling factor"/>
    <property type="match status" value="1"/>
</dbReference>
<dbReference type="FunFam" id="3.30.1360.40:FF:000001">
    <property type="entry name" value="Ribosome-recycling factor"/>
    <property type="match status" value="1"/>
</dbReference>
<dbReference type="Gene3D" id="3.30.1360.40">
    <property type="match status" value="1"/>
</dbReference>
<dbReference type="Gene3D" id="1.10.132.20">
    <property type="entry name" value="Ribosome-recycling factor"/>
    <property type="match status" value="1"/>
</dbReference>
<dbReference type="HAMAP" id="MF_00040">
    <property type="entry name" value="RRF"/>
    <property type="match status" value="1"/>
</dbReference>
<dbReference type="InterPro" id="IPR002661">
    <property type="entry name" value="Ribosome_recyc_fac"/>
</dbReference>
<dbReference type="InterPro" id="IPR023584">
    <property type="entry name" value="Ribosome_recyc_fac_dom"/>
</dbReference>
<dbReference type="InterPro" id="IPR036191">
    <property type="entry name" value="RRF_sf"/>
</dbReference>
<dbReference type="NCBIfam" id="TIGR00496">
    <property type="entry name" value="frr"/>
    <property type="match status" value="1"/>
</dbReference>
<dbReference type="PANTHER" id="PTHR20982:SF3">
    <property type="entry name" value="MITOCHONDRIAL RIBOSOME RECYCLING FACTOR PSEUDO 1"/>
    <property type="match status" value="1"/>
</dbReference>
<dbReference type="PANTHER" id="PTHR20982">
    <property type="entry name" value="RIBOSOME RECYCLING FACTOR"/>
    <property type="match status" value="1"/>
</dbReference>
<dbReference type="Pfam" id="PF01765">
    <property type="entry name" value="RRF"/>
    <property type="match status" value="1"/>
</dbReference>
<dbReference type="SUPFAM" id="SSF55194">
    <property type="entry name" value="Ribosome recycling factor, RRF"/>
    <property type="match status" value="1"/>
</dbReference>
<organism>
    <name type="scientific">Leuconostoc mesenteroides subsp. mesenteroides (strain ATCC 8293 / DSM 20343 / BCRC 11652 / CCM 1803 / JCM 6124 / NCDO 523 / NBRC 100496 / NCIMB 8023 / NCTC 12954 / NRRL B-1118 / 37Y)</name>
    <dbReference type="NCBI Taxonomy" id="203120"/>
    <lineage>
        <taxon>Bacteria</taxon>
        <taxon>Bacillati</taxon>
        <taxon>Bacillota</taxon>
        <taxon>Bacilli</taxon>
        <taxon>Lactobacillales</taxon>
        <taxon>Lactobacillaceae</taxon>
        <taxon>Leuconostoc</taxon>
    </lineage>
</organism>
<evidence type="ECO:0000255" key="1">
    <source>
        <dbReference type="HAMAP-Rule" id="MF_00040"/>
    </source>
</evidence>
<evidence type="ECO:0000256" key="2">
    <source>
        <dbReference type="SAM" id="MobiDB-lite"/>
    </source>
</evidence>
<reference key="1">
    <citation type="journal article" date="2006" name="Proc. Natl. Acad. Sci. U.S.A.">
        <title>Comparative genomics of the lactic acid bacteria.</title>
        <authorList>
            <person name="Makarova K.S."/>
            <person name="Slesarev A."/>
            <person name="Wolf Y.I."/>
            <person name="Sorokin A."/>
            <person name="Mirkin B."/>
            <person name="Koonin E.V."/>
            <person name="Pavlov A."/>
            <person name="Pavlova N."/>
            <person name="Karamychev V."/>
            <person name="Polouchine N."/>
            <person name="Shakhova V."/>
            <person name="Grigoriev I."/>
            <person name="Lou Y."/>
            <person name="Rohksar D."/>
            <person name="Lucas S."/>
            <person name="Huang K."/>
            <person name="Goodstein D.M."/>
            <person name="Hawkins T."/>
            <person name="Plengvidhya V."/>
            <person name="Welker D."/>
            <person name="Hughes J."/>
            <person name="Goh Y."/>
            <person name="Benson A."/>
            <person name="Baldwin K."/>
            <person name="Lee J.-H."/>
            <person name="Diaz-Muniz I."/>
            <person name="Dosti B."/>
            <person name="Smeianov V."/>
            <person name="Wechter W."/>
            <person name="Barabote R."/>
            <person name="Lorca G."/>
            <person name="Altermann E."/>
            <person name="Barrangou R."/>
            <person name="Ganesan B."/>
            <person name="Xie Y."/>
            <person name="Rawsthorne H."/>
            <person name="Tamir D."/>
            <person name="Parker C."/>
            <person name="Breidt F."/>
            <person name="Broadbent J.R."/>
            <person name="Hutkins R."/>
            <person name="O'Sullivan D."/>
            <person name="Steele J."/>
            <person name="Unlu G."/>
            <person name="Saier M.H. Jr."/>
            <person name="Klaenhammer T."/>
            <person name="Richardson P."/>
            <person name="Kozyavkin S."/>
            <person name="Weimer B.C."/>
            <person name="Mills D.A."/>
        </authorList>
    </citation>
    <scope>NUCLEOTIDE SEQUENCE [LARGE SCALE GENOMIC DNA]</scope>
    <source>
        <strain>ATCC 8293 / DSM 20343 / BCRC 11652 / CCM 1803 / JCM 6124 / NCDO 523 / NBRC 100496 / NCIMB 8023 / NCTC 12954 / NRRL B-1118 / 37Y</strain>
    </source>
</reference>
<gene>
    <name evidence="1" type="primary">frr</name>
    <name type="ordered locus">LEUM_1196</name>
</gene>
<keyword id="KW-0963">Cytoplasm</keyword>
<keyword id="KW-0648">Protein biosynthesis</keyword>
<keyword id="KW-1185">Reference proteome</keyword>
<feature type="chain" id="PRO_0000341018" description="Ribosome-recycling factor">
    <location>
        <begin position="1"/>
        <end position="181"/>
    </location>
</feature>
<feature type="region of interest" description="Disordered" evidence="2">
    <location>
        <begin position="135"/>
        <end position="160"/>
    </location>
</feature>
<proteinExistence type="inferred from homology"/>
<comment type="function">
    <text evidence="1">Responsible for the release of ribosomes from messenger RNA at the termination of protein biosynthesis. May increase the efficiency of translation by recycling ribosomes from one round of translation to another.</text>
</comment>
<comment type="subcellular location">
    <subcellularLocation>
        <location evidence="1">Cytoplasm</location>
    </subcellularLocation>
</comment>
<comment type="similarity">
    <text evidence="1">Belongs to the RRF family.</text>
</comment>